<keyword id="KW-0150">Chloroplast</keyword>
<keyword id="KW-0275">Fatty acid biosynthesis</keyword>
<keyword id="KW-0276">Fatty acid metabolism</keyword>
<keyword id="KW-0444">Lipid biosynthesis</keyword>
<keyword id="KW-0443">Lipid metabolism</keyword>
<keyword id="KW-0596">Phosphopantetheine</keyword>
<keyword id="KW-0597">Phosphoprotein</keyword>
<keyword id="KW-0934">Plastid</keyword>
<reference key="1">
    <citation type="journal article" date="1995" name="Plant Mol. Biol. Rep.">
        <title>The chloroplast genome of a chlorophyll a+c-containing alga, Odontella sinensis.</title>
        <authorList>
            <person name="Kowallik K.V."/>
            <person name="Stoebe B."/>
            <person name="Schaffran I."/>
            <person name="Kroth-Pancic P."/>
            <person name="Freier U."/>
        </authorList>
    </citation>
    <scope>NUCLEOTIDE SEQUENCE [LARGE SCALE GENOMIC DNA]</scope>
</reference>
<organism>
    <name type="scientific">Trieres chinensis</name>
    <name type="common">Marine centric diatom</name>
    <name type="synonym">Odontella sinensis</name>
    <dbReference type="NCBI Taxonomy" id="1514140"/>
    <lineage>
        <taxon>Eukaryota</taxon>
        <taxon>Sar</taxon>
        <taxon>Stramenopiles</taxon>
        <taxon>Ochrophyta</taxon>
        <taxon>Bacillariophyta</taxon>
        <taxon>Mediophyceae</taxon>
        <taxon>Biddulphiophycidae</taxon>
        <taxon>Eupodiscales</taxon>
        <taxon>Parodontellaceae</taxon>
        <taxon>Trieres</taxon>
    </lineage>
</organism>
<protein>
    <recommendedName>
        <fullName evidence="1">Acyl carrier protein</fullName>
        <shortName evidence="1">ACP</shortName>
    </recommendedName>
</protein>
<sequence>MSDDTFSRIQSIVEEQLGVESSKIKLETDFQKDLGADSLDVVELIMAFEEEFDINVNDDAAGDIKTVQQVLEYIEAESAK</sequence>
<comment type="function">
    <text evidence="1">Carrier of the growing fatty acid chain in fatty acid biosynthesis.</text>
</comment>
<comment type="pathway">
    <text evidence="1">Lipid metabolism; fatty acid biosynthesis.</text>
</comment>
<comment type="subcellular location">
    <subcellularLocation>
        <location>Plastid</location>
        <location>Chloroplast</location>
    </subcellularLocation>
</comment>
<comment type="PTM">
    <text evidence="1">4'-phosphopantetheine is transferred from CoA to a specific serine of apo-ACP by AcpS. This modification is essential for activity because fatty acids are bound in thioester linkage to the sulfhydryl of the prosthetic group.</text>
</comment>
<comment type="similarity">
    <text evidence="1">Belongs to the acyl carrier protein (ACP) family.</text>
</comment>
<feature type="chain" id="PRO_0000180234" description="Acyl carrier protein">
    <location>
        <begin position="1"/>
        <end position="80"/>
    </location>
</feature>
<feature type="domain" description="Carrier" evidence="2">
    <location>
        <begin position="3"/>
        <end position="78"/>
    </location>
</feature>
<feature type="modified residue" description="O-(pantetheine 4'-phosphoryl)serine" evidence="2">
    <location>
        <position position="38"/>
    </location>
</feature>
<name>ACP_TRICV</name>
<evidence type="ECO:0000255" key="1">
    <source>
        <dbReference type="HAMAP-Rule" id="MF_01217"/>
    </source>
</evidence>
<evidence type="ECO:0000255" key="2">
    <source>
        <dbReference type="PROSITE-ProRule" id="PRU00258"/>
    </source>
</evidence>
<proteinExistence type="inferred from homology"/>
<geneLocation type="chloroplast"/>
<dbReference type="EMBL" id="Z67753">
    <property type="protein sequence ID" value="CAA91668.1"/>
    <property type="molecule type" value="Genomic_DNA"/>
</dbReference>
<dbReference type="PIR" id="S78295">
    <property type="entry name" value="S78295"/>
</dbReference>
<dbReference type="RefSeq" id="NP_043636.1">
    <property type="nucleotide sequence ID" value="NC_001713.1"/>
</dbReference>
<dbReference type="SMR" id="P49517"/>
<dbReference type="GeneID" id="801835"/>
<dbReference type="UniPathway" id="UPA00094"/>
<dbReference type="GO" id="GO:0009507">
    <property type="term" value="C:chloroplast"/>
    <property type="evidence" value="ECO:0007669"/>
    <property type="project" value="UniProtKB-SubCell"/>
</dbReference>
<dbReference type="GO" id="GO:0000035">
    <property type="term" value="F:acyl binding"/>
    <property type="evidence" value="ECO:0007669"/>
    <property type="project" value="TreeGrafter"/>
</dbReference>
<dbReference type="GO" id="GO:0000036">
    <property type="term" value="F:acyl carrier activity"/>
    <property type="evidence" value="ECO:0007669"/>
    <property type="project" value="UniProtKB-UniRule"/>
</dbReference>
<dbReference type="FunFam" id="1.10.1200.10:FF:000003">
    <property type="entry name" value="Acyl carrier protein"/>
    <property type="match status" value="1"/>
</dbReference>
<dbReference type="Gene3D" id="1.10.1200.10">
    <property type="entry name" value="ACP-like"/>
    <property type="match status" value="1"/>
</dbReference>
<dbReference type="HAMAP" id="MF_01217">
    <property type="entry name" value="Acyl_carrier"/>
    <property type="match status" value="1"/>
</dbReference>
<dbReference type="InterPro" id="IPR003231">
    <property type="entry name" value="ACP"/>
</dbReference>
<dbReference type="InterPro" id="IPR036736">
    <property type="entry name" value="ACP-like_sf"/>
</dbReference>
<dbReference type="InterPro" id="IPR009081">
    <property type="entry name" value="PP-bd_ACP"/>
</dbReference>
<dbReference type="InterPro" id="IPR006162">
    <property type="entry name" value="Ppantetheine_attach_site"/>
</dbReference>
<dbReference type="NCBIfam" id="TIGR00517">
    <property type="entry name" value="acyl_carrier"/>
    <property type="match status" value="1"/>
</dbReference>
<dbReference type="NCBIfam" id="NF002148">
    <property type="entry name" value="PRK00982.1-2"/>
    <property type="match status" value="1"/>
</dbReference>
<dbReference type="NCBIfam" id="NF002150">
    <property type="entry name" value="PRK00982.1-4"/>
    <property type="match status" value="1"/>
</dbReference>
<dbReference type="NCBIfam" id="NF002151">
    <property type="entry name" value="PRK00982.1-5"/>
    <property type="match status" value="1"/>
</dbReference>
<dbReference type="PANTHER" id="PTHR20863">
    <property type="entry name" value="ACYL CARRIER PROTEIN"/>
    <property type="match status" value="1"/>
</dbReference>
<dbReference type="PANTHER" id="PTHR20863:SF76">
    <property type="entry name" value="CARRIER DOMAIN-CONTAINING PROTEIN"/>
    <property type="match status" value="1"/>
</dbReference>
<dbReference type="Pfam" id="PF00550">
    <property type="entry name" value="PP-binding"/>
    <property type="match status" value="1"/>
</dbReference>
<dbReference type="SUPFAM" id="SSF47336">
    <property type="entry name" value="ACP-like"/>
    <property type="match status" value="1"/>
</dbReference>
<dbReference type="PROSITE" id="PS50075">
    <property type="entry name" value="CARRIER"/>
    <property type="match status" value="1"/>
</dbReference>
<dbReference type="PROSITE" id="PS00012">
    <property type="entry name" value="PHOSPHOPANTETHEINE"/>
    <property type="match status" value="1"/>
</dbReference>
<accession>P49517</accession>
<gene>
    <name evidence="1" type="primary">acpP</name>
    <name type="synonym">acl1</name>
    <name type="synonym">acp</name>
</gene>